<name>RNB_SHISS</name>
<keyword id="KW-0963">Cytoplasm</keyword>
<keyword id="KW-0269">Exonuclease</keyword>
<keyword id="KW-0378">Hydrolase</keyword>
<keyword id="KW-0540">Nuclease</keyword>
<keyword id="KW-1185">Reference proteome</keyword>
<keyword id="KW-0694">RNA-binding</keyword>
<gene>
    <name evidence="2" type="primary">rnb</name>
    <name type="ordered locus">SSON_1854</name>
</gene>
<protein>
    <recommendedName>
        <fullName evidence="2">Exoribonuclease 2</fullName>
        <ecNumber evidence="2">3.1.13.1</ecNumber>
    </recommendedName>
    <alternativeName>
        <fullName evidence="2">Exoribonuclease II</fullName>
        <shortName evidence="2">RNase II</shortName>
        <shortName evidence="2">Ribonuclease II</shortName>
    </alternativeName>
</protein>
<organism>
    <name type="scientific">Shigella sonnei (strain Ss046)</name>
    <dbReference type="NCBI Taxonomy" id="300269"/>
    <lineage>
        <taxon>Bacteria</taxon>
        <taxon>Pseudomonadati</taxon>
        <taxon>Pseudomonadota</taxon>
        <taxon>Gammaproteobacteria</taxon>
        <taxon>Enterobacterales</taxon>
        <taxon>Enterobacteriaceae</taxon>
        <taxon>Shigella</taxon>
    </lineage>
</organism>
<feature type="chain" id="PRO_1000063901" description="Exoribonuclease 2">
    <location>
        <begin position="1"/>
        <end position="644"/>
    </location>
</feature>
<feature type="domain" description="RNB" evidence="1">
    <location>
        <begin position="189"/>
        <end position="516"/>
    </location>
</feature>
<feature type="domain" description="S1 motif" evidence="2">
    <location>
        <begin position="561"/>
        <end position="643"/>
    </location>
</feature>
<comment type="function">
    <text evidence="2">Involved in mRNA degradation. Hydrolyzes single-stranded polyribonucleotides processively in the 3' to 5' direction.</text>
</comment>
<comment type="catalytic activity">
    <reaction evidence="2">
        <text>Exonucleolytic cleavage in the 3'- to 5'-direction to yield nucleoside 5'-phosphates.</text>
        <dbReference type="EC" id="3.1.13.1"/>
    </reaction>
</comment>
<comment type="subcellular location">
    <subcellularLocation>
        <location evidence="2">Cytoplasm</location>
    </subcellularLocation>
</comment>
<comment type="similarity">
    <text evidence="2">Belongs to the RNR ribonuclease family. RNase II subfamily.</text>
</comment>
<dbReference type="EC" id="3.1.13.1" evidence="2"/>
<dbReference type="EMBL" id="CP000038">
    <property type="protein sequence ID" value="AAZ88527.1"/>
    <property type="molecule type" value="Genomic_DNA"/>
</dbReference>
<dbReference type="RefSeq" id="WP_000484956.1">
    <property type="nucleotide sequence ID" value="NC_007384.1"/>
</dbReference>
<dbReference type="SMR" id="Q3Z135"/>
<dbReference type="KEGG" id="ssn:SSON_1854"/>
<dbReference type="HOGENOM" id="CLU_002333_7_3_6"/>
<dbReference type="Proteomes" id="UP000002529">
    <property type="component" value="Chromosome"/>
</dbReference>
<dbReference type="GO" id="GO:0005829">
    <property type="term" value="C:cytosol"/>
    <property type="evidence" value="ECO:0007669"/>
    <property type="project" value="TreeGrafter"/>
</dbReference>
<dbReference type="GO" id="GO:0008859">
    <property type="term" value="F:exoribonuclease II activity"/>
    <property type="evidence" value="ECO:0007669"/>
    <property type="project" value="UniProtKB-UniRule"/>
</dbReference>
<dbReference type="GO" id="GO:0003723">
    <property type="term" value="F:RNA binding"/>
    <property type="evidence" value="ECO:0007669"/>
    <property type="project" value="UniProtKB-KW"/>
</dbReference>
<dbReference type="GO" id="GO:0006402">
    <property type="term" value="P:mRNA catabolic process"/>
    <property type="evidence" value="ECO:0007669"/>
    <property type="project" value="UniProtKB-UniRule"/>
</dbReference>
<dbReference type="FunFam" id="2.40.50.140:FF:000079">
    <property type="entry name" value="Exoribonuclease 2"/>
    <property type="match status" value="1"/>
</dbReference>
<dbReference type="FunFam" id="2.40.50.140:FF:000081">
    <property type="entry name" value="Exoribonuclease 2"/>
    <property type="match status" value="1"/>
</dbReference>
<dbReference type="FunFam" id="2.40.50.640:FF:000001">
    <property type="entry name" value="Exoribonuclease 2"/>
    <property type="match status" value="1"/>
</dbReference>
<dbReference type="Gene3D" id="2.40.50.640">
    <property type="match status" value="1"/>
</dbReference>
<dbReference type="Gene3D" id="2.40.50.140">
    <property type="entry name" value="Nucleic acid-binding proteins"/>
    <property type="match status" value="2"/>
</dbReference>
<dbReference type="HAMAP" id="MF_01036">
    <property type="entry name" value="RNase_II"/>
    <property type="match status" value="1"/>
</dbReference>
<dbReference type="InterPro" id="IPR011129">
    <property type="entry name" value="CSD"/>
</dbReference>
<dbReference type="InterPro" id="IPR012340">
    <property type="entry name" value="NA-bd_OB-fold"/>
</dbReference>
<dbReference type="InterPro" id="IPR013223">
    <property type="entry name" value="RNase_B_OB_dom"/>
</dbReference>
<dbReference type="InterPro" id="IPR011804">
    <property type="entry name" value="RNase_II"/>
</dbReference>
<dbReference type="InterPro" id="IPR001900">
    <property type="entry name" value="RNase_II/R"/>
</dbReference>
<dbReference type="InterPro" id="IPR022966">
    <property type="entry name" value="RNase_II/R_CS"/>
</dbReference>
<dbReference type="InterPro" id="IPR004476">
    <property type="entry name" value="RNase_II/RNase_R"/>
</dbReference>
<dbReference type="InterPro" id="IPR050180">
    <property type="entry name" value="RNR_Ribonuclease"/>
</dbReference>
<dbReference type="InterPro" id="IPR003029">
    <property type="entry name" value="S1_domain"/>
</dbReference>
<dbReference type="NCBIfam" id="TIGR00358">
    <property type="entry name" value="3_prime_RNase"/>
    <property type="match status" value="1"/>
</dbReference>
<dbReference type="NCBIfam" id="NF003455">
    <property type="entry name" value="PRK05054.1"/>
    <property type="match status" value="1"/>
</dbReference>
<dbReference type="NCBIfam" id="TIGR02062">
    <property type="entry name" value="RNase_B"/>
    <property type="match status" value="1"/>
</dbReference>
<dbReference type="PANTHER" id="PTHR23355:SF37">
    <property type="entry name" value="EXORIBONUCLEASE 2"/>
    <property type="match status" value="1"/>
</dbReference>
<dbReference type="PANTHER" id="PTHR23355">
    <property type="entry name" value="RIBONUCLEASE"/>
    <property type="match status" value="1"/>
</dbReference>
<dbReference type="Pfam" id="PF08206">
    <property type="entry name" value="OB_RNB"/>
    <property type="match status" value="1"/>
</dbReference>
<dbReference type="Pfam" id="PF00773">
    <property type="entry name" value="RNB"/>
    <property type="match status" value="1"/>
</dbReference>
<dbReference type="Pfam" id="PF00575">
    <property type="entry name" value="S1"/>
    <property type="match status" value="1"/>
</dbReference>
<dbReference type="SMART" id="SM00357">
    <property type="entry name" value="CSP"/>
    <property type="match status" value="1"/>
</dbReference>
<dbReference type="SMART" id="SM00955">
    <property type="entry name" value="RNB"/>
    <property type="match status" value="1"/>
</dbReference>
<dbReference type="SMART" id="SM00316">
    <property type="entry name" value="S1"/>
    <property type="match status" value="1"/>
</dbReference>
<dbReference type="SUPFAM" id="SSF50249">
    <property type="entry name" value="Nucleic acid-binding proteins"/>
    <property type="match status" value="4"/>
</dbReference>
<dbReference type="PROSITE" id="PS01175">
    <property type="entry name" value="RIBONUCLEASE_II"/>
    <property type="match status" value="1"/>
</dbReference>
<reference key="1">
    <citation type="journal article" date="2005" name="Nucleic Acids Res.">
        <title>Genome dynamics and diversity of Shigella species, the etiologic agents of bacillary dysentery.</title>
        <authorList>
            <person name="Yang F."/>
            <person name="Yang J."/>
            <person name="Zhang X."/>
            <person name="Chen L."/>
            <person name="Jiang Y."/>
            <person name="Yan Y."/>
            <person name="Tang X."/>
            <person name="Wang J."/>
            <person name="Xiong Z."/>
            <person name="Dong J."/>
            <person name="Xue Y."/>
            <person name="Zhu Y."/>
            <person name="Xu X."/>
            <person name="Sun L."/>
            <person name="Chen S."/>
            <person name="Nie H."/>
            <person name="Peng J."/>
            <person name="Xu J."/>
            <person name="Wang Y."/>
            <person name="Yuan Z."/>
            <person name="Wen Y."/>
            <person name="Yao Z."/>
            <person name="Shen Y."/>
            <person name="Qiang B."/>
            <person name="Hou Y."/>
            <person name="Yu J."/>
            <person name="Jin Q."/>
        </authorList>
    </citation>
    <scope>NUCLEOTIDE SEQUENCE [LARGE SCALE GENOMIC DNA]</scope>
    <source>
        <strain>Ss046</strain>
    </source>
</reference>
<proteinExistence type="inferred from homology"/>
<accession>Q3Z135</accession>
<evidence type="ECO:0000255" key="1"/>
<evidence type="ECO:0000255" key="2">
    <source>
        <dbReference type="HAMAP-Rule" id="MF_01036"/>
    </source>
</evidence>
<sequence length="644" mass="72403">MFQDNPLLAQLKQQLHSQTPRAEGVVKATEKGFGFLEVDAKKSYFIPPPQMKKVMHGDRIIAVIHSEKERESAEPEELVEPFLTRFVGKVQGKNDRLAIVPDHPLLKDAIPCRAARGLNHEFKEGDWAVAEMRRHPLKGDRSFYAELTQYITFGDDHFVPWWVTLARHNLEKEAPDGVATEMLDEGLVREDLTALDFVTIDSASTEDMDDALFAKALPDDKLQLIVAIADPTAWIAEGSKLDKAAKIRAFTNYLPGFNIPMLPRELSDDLCSLRANEVRPVLACRMTLSADGTIEDNIEFFAATIESKAKLVYDQVSDWLENTGDWQPESEAIAEQVRLLAQICQRRGEWRHNHALVFKDRPDYRFILGEKGEVLDIVAEPRRIANRIVEEAMIAANICAARVLRDKLGFGIYNVHMGFDPANADALAALLKTHGLHVDAEEVLTLDGFCKLRRELDAQPTGFLDSRIRRFQSFAEISTEPGPHFGLGLEAYATWTSPIRKYGDMINHRLLKAVIKGETATRPQDEITVQMAERRRLNRMAERDVGDWLYARFLKDKAGTGTRFAAEIVDISRGGMRVRLVDNGAIAFIPAPFLHAVRDELVCSQENGTVQIKGETVYKVTDVIDVTIAEVRMETRGIIARPVA</sequence>